<sequence length="939" mass="106436">MDYRDSLNLPKTNFKMKANLAQREPMILKRWEKEGLYQMLQERAQDRPLFVLHDGPPYANGHIHLGHAFNKILKDIILRSKRASGFNAPYVPGWDCHGLPIEHNVDKELGEEKKKTIPILAKRAACRKYANKWIKTQKPEFKRLGVLGDWEDPYLTINYSYEAAIAREFNKFLLSGSVVRNRKPVYWCSTCTTALAEAEVEYHDHTSPSIYVKFPVIEDFSDVDPALAGDKTFVVIWTTTPWTLPSNTAVAFHPKFQYAAVAVGEETWVLAEDLVEKFMQEVGIEDYSIKSTFTAEKLENRNCRHPFMDRDSRLVFADYVTTEAGTGCVHTAPGHGADDYATGLRYGLEVLSPVDGDGIYTKEAGPYAGRQVPEVNSDIIADLAESGLLVFKKDINHSYPHCWRCRKPVMYRATPQWFISMENNDLRKKALKNIESVSWTPSWGMNRIHSMVESRPDWCLSRQRTWGVPLTVISCKDCGEVVKSEEVVAKIDELFLKEGADAWFSHPVEDFLPEGHVCTCGCATFIKEEDILDVWFDSGSSFAAVCELRDDLVAPADLYLEGSDQHRGWFQSSLITATGTRGYAPFKGVLTHGYVVDGQGKKMSKSVGNVVAPQEVIDEYGAEILRLWVSSEDYRDDVKVSKEILKQVSDSYRKIRNTIRYFLGNLNDFDPSKDRIAVSEMSELDRWALARFEELRAKITESYDKYEFHAINQSLNYFCGTTMSAFYLDIIKDRLYVEGTDSTIRRASQTVLYDILDGLLRLMSPVLSFTAADAWNALYSLGEKDSLEKSVFFADFPVAIDPQFDAEQEARWQRLIKIRSELTKALELARRDKVIGHSLEAEVLVKGEGELGEFIHAEWQHLREISIVSAMSEIEGAPEESAYVSEEVEGLVVSVKLAPGVKCDRCWIRSTTVGDSVEHPQLCSRCLAIVEDMDLEMDA</sequence>
<name>SYI_DESPS</name>
<proteinExistence type="inferred from homology"/>
<accession>Q6AK45</accession>
<feature type="chain" id="PRO_0000098379" description="Isoleucine--tRNA ligase">
    <location>
        <begin position="1"/>
        <end position="939"/>
    </location>
</feature>
<feature type="short sequence motif" description="'HIGH' region">
    <location>
        <begin position="57"/>
        <end position="67"/>
    </location>
</feature>
<feature type="short sequence motif" description="'KMSKS' region">
    <location>
        <begin position="602"/>
        <end position="606"/>
    </location>
</feature>
<feature type="binding site" evidence="1">
    <location>
        <position position="561"/>
    </location>
    <ligand>
        <name>L-isoleucyl-5'-AMP</name>
        <dbReference type="ChEBI" id="CHEBI:178002"/>
    </ligand>
</feature>
<feature type="binding site" evidence="1">
    <location>
        <position position="605"/>
    </location>
    <ligand>
        <name>ATP</name>
        <dbReference type="ChEBI" id="CHEBI:30616"/>
    </ligand>
</feature>
<feature type="binding site" evidence="1">
    <location>
        <position position="903"/>
    </location>
    <ligand>
        <name>Zn(2+)</name>
        <dbReference type="ChEBI" id="CHEBI:29105"/>
    </ligand>
</feature>
<feature type="binding site" evidence="1">
    <location>
        <position position="906"/>
    </location>
    <ligand>
        <name>Zn(2+)</name>
        <dbReference type="ChEBI" id="CHEBI:29105"/>
    </ligand>
</feature>
<feature type="binding site" evidence="1">
    <location>
        <position position="923"/>
    </location>
    <ligand>
        <name>Zn(2+)</name>
        <dbReference type="ChEBI" id="CHEBI:29105"/>
    </ligand>
</feature>
<feature type="binding site" evidence="1">
    <location>
        <position position="926"/>
    </location>
    <ligand>
        <name>Zn(2+)</name>
        <dbReference type="ChEBI" id="CHEBI:29105"/>
    </ligand>
</feature>
<keyword id="KW-0030">Aminoacyl-tRNA synthetase</keyword>
<keyword id="KW-0067">ATP-binding</keyword>
<keyword id="KW-0963">Cytoplasm</keyword>
<keyword id="KW-0436">Ligase</keyword>
<keyword id="KW-0479">Metal-binding</keyword>
<keyword id="KW-0547">Nucleotide-binding</keyword>
<keyword id="KW-0648">Protein biosynthesis</keyword>
<keyword id="KW-1185">Reference proteome</keyword>
<keyword id="KW-0862">Zinc</keyword>
<organism>
    <name type="scientific">Desulfotalea psychrophila (strain LSv54 / DSM 12343)</name>
    <dbReference type="NCBI Taxonomy" id="177439"/>
    <lineage>
        <taxon>Bacteria</taxon>
        <taxon>Pseudomonadati</taxon>
        <taxon>Thermodesulfobacteriota</taxon>
        <taxon>Desulfobulbia</taxon>
        <taxon>Desulfobulbales</taxon>
        <taxon>Desulfocapsaceae</taxon>
        <taxon>Desulfotalea</taxon>
    </lineage>
</organism>
<evidence type="ECO:0000255" key="1">
    <source>
        <dbReference type="HAMAP-Rule" id="MF_02002"/>
    </source>
</evidence>
<reference key="1">
    <citation type="journal article" date="2004" name="Environ. Microbiol.">
        <title>The genome of Desulfotalea psychrophila, a sulfate-reducing bacterium from permanently cold Arctic sediments.</title>
        <authorList>
            <person name="Rabus R."/>
            <person name="Ruepp A."/>
            <person name="Frickey T."/>
            <person name="Rattei T."/>
            <person name="Fartmann B."/>
            <person name="Stark M."/>
            <person name="Bauer M."/>
            <person name="Zibat A."/>
            <person name="Lombardot T."/>
            <person name="Becker I."/>
            <person name="Amann J."/>
            <person name="Gellner K."/>
            <person name="Teeling H."/>
            <person name="Leuschner W.D."/>
            <person name="Gloeckner F.-O."/>
            <person name="Lupas A.N."/>
            <person name="Amann R."/>
            <person name="Klenk H.-P."/>
        </authorList>
    </citation>
    <scope>NUCLEOTIDE SEQUENCE [LARGE SCALE GENOMIC DNA]</scope>
    <source>
        <strain>DSM 12343 / LSv54</strain>
    </source>
</reference>
<dbReference type="EC" id="6.1.1.5" evidence="1"/>
<dbReference type="EMBL" id="CR522870">
    <property type="protein sequence ID" value="CAG37281.1"/>
    <property type="molecule type" value="Genomic_DNA"/>
</dbReference>
<dbReference type="RefSeq" id="WP_011189793.1">
    <property type="nucleotide sequence ID" value="NC_006138.1"/>
</dbReference>
<dbReference type="SMR" id="Q6AK45"/>
<dbReference type="STRING" id="177439.DP2552"/>
<dbReference type="KEGG" id="dps:DP2552"/>
<dbReference type="eggNOG" id="COG0060">
    <property type="taxonomic scope" value="Bacteria"/>
</dbReference>
<dbReference type="HOGENOM" id="CLU_001493_7_0_7"/>
<dbReference type="OrthoDB" id="9810365at2"/>
<dbReference type="Proteomes" id="UP000000602">
    <property type="component" value="Chromosome"/>
</dbReference>
<dbReference type="GO" id="GO:0005829">
    <property type="term" value="C:cytosol"/>
    <property type="evidence" value="ECO:0007669"/>
    <property type="project" value="TreeGrafter"/>
</dbReference>
<dbReference type="GO" id="GO:0002161">
    <property type="term" value="F:aminoacyl-tRNA deacylase activity"/>
    <property type="evidence" value="ECO:0007669"/>
    <property type="project" value="InterPro"/>
</dbReference>
<dbReference type="GO" id="GO:0005524">
    <property type="term" value="F:ATP binding"/>
    <property type="evidence" value="ECO:0007669"/>
    <property type="project" value="UniProtKB-UniRule"/>
</dbReference>
<dbReference type="GO" id="GO:0004822">
    <property type="term" value="F:isoleucine-tRNA ligase activity"/>
    <property type="evidence" value="ECO:0007669"/>
    <property type="project" value="UniProtKB-UniRule"/>
</dbReference>
<dbReference type="GO" id="GO:0000049">
    <property type="term" value="F:tRNA binding"/>
    <property type="evidence" value="ECO:0007669"/>
    <property type="project" value="InterPro"/>
</dbReference>
<dbReference type="GO" id="GO:0008270">
    <property type="term" value="F:zinc ion binding"/>
    <property type="evidence" value="ECO:0007669"/>
    <property type="project" value="UniProtKB-UniRule"/>
</dbReference>
<dbReference type="GO" id="GO:0006428">
    <property type="term" value="P:isoleucyl-tRNA aminoacylation"/>
    <property type="evidence" value="ECO:0007669"/>
    <property type="project" value="UniProtKB-UniRule"/>
</dbReference>
<dbReference type="CDD" id="cd07960">
    <property type="entry name" value="Anticodon_Ia_Ile_BEm"/>
    <property type="match status" value="1"/>
</dbReference>
<dbReference type="CDD" id="cd00818">
    <property type="entry name" value="IleRS_core"/>
    <property type="match status" value="1"/>
</dbReference>
<dbReference type="FunFam" id="1.10.730.20:FF:000001">
    <property type="entry name" value="Isoleucine--tRNA ligase"/>
    <property type="match status" value="1"/>
</dbReference>
<dbReference type="FunFam" id="3.40.50.620:FF:000042">
    <property type="entry name" value="Isoleucine--tRNA ligase"/>
    <property type="match status" value="1"/>
</dbReference>
<dbReference type="Gene3D" id="1.10.730.20">
    <property type="match status" value="1"/>
</dbReference>
<dbReference type="Gene3D" id="3.40.50.620">
    <property type="entry name" value="HUPs"/>
    <property type="match status" value="2"/>
</dbReference>
<dbReference type="Gene3D" id="1.10.10.830">
    <property type="entry name" value="Ile-tRNA synthetase CP2 domain-like"/>
    <property type="match status" value="1"/>
</dbReference>
<dbReference type="Gene3D" id="3.90.740.10">
    <property type="entry name" value="Valyl/Leucyl/Isoleucyl-tRNA synthetase, editing domain"/>
    <property type="match status" value="1"/>
</dbReference>
<dbReference type="HAMAP" id="MF_02002">
    <property type="entry name" value="Ile_tRNA_synth_type1"/>
    <property type="match status" value="1"/>
</dbReference>
<dbReference type="InterPro" id="IPR001412">
    <property type="entry name" value="aa-tRNA-synth_I_CS"/>
</dbReference>
<dbReference type="InterPro" id="IPR002300">
    <property type="entry name" value="aa-tRNA-synth_Ia"/>
</dbReference>
<dbReference type="InterPro" id="IPR033708">
    <property type="entry name" value="Anticodon_Ile_BEm"/>
</dbReference>
<dbReference type="InterPro" id="IPR002301">
    <property type="entry name" value="Ile-tRNA-ligase"/>
</dbReference>
<dbReference type="InterPro" id="IPR023585">
    <property type="entry name" value="Ile-tRNA-ligase_type1"/>
</dbReference>
<dbReference type="InterPro" id="IPR050081">
    <property type="entry name" value="Ile-tRNA_ligase"/>
</dbReference>
<dbReference type="InterPro" id="IPR013155">
    <property type="entry name" value="M/V/L/I-tRNA-synth_anticd-bd"/>
</dbReference>
<dbReference type="InterPro" id="IPR014729">
    <property type="entry name" value="Rossmann-like_a/b/a_fold"/>
</dbReference>
<dbReference type="InterPro" id="IPR009080">
    <property type="entry name" value="tRNAsynth_Ia_anticodon-bd"/>
</dbReference>
<dbReference type="InterPro" id="IPR009008">
    <property type="entry name" value="Val/Leu/Ile-tRNA-synth_edit"/>
</dbReference>
<dbReference type="InterPro" id="IPR010663">
    <property type="entry name" value="Znf_FPG/IleRS"/>
</dbReference>
<dbReference type="NCBIfam" id="TIGR00392">
    <property type="entry name" value="ileS"/>
    <property type="match status" value="1"/>
</dbReference>
<dbReference type="PANTHER" id="PTHR42765:SF1">
    <property type="entry name" value="ISOLEUCINE--TRNA LIGASE, MITOCHONDRIAL"/>
    <property type="match status" value="1"/>
</dbReference>
<dbReference type="PANTHER" id="PTHR42765">
    <property type="entry name" value="SOLEUCYL-TRNA SYNTHETASE"/>
    <property type="match status" value="1"/>
</dbReference>
<dbReference type="Pfam" id="PF08264">
    <property type="entry name" value="Anticodon_1"/>
    <property type="match status" value="1"/>
</dbReference>
<dbReference type="Pfam" id="PF00133">
    <property type="entry name" value="tRNA-synt_1"/>
    <property type="match status" value="1"/>
</dbReference>
<dbReference type="Pfam" id="PF06827">
    <property type="entry name" value="zf-FPG_IleRS"/>
    <property type="match status" value="1"/>
</dbReference>
<dbReference type="PRINTS" id="PR00984">
    <property type="entry name" value="TRNASYNTHILE"/>
</dbReference>
<dbReference type="SUPFAM" id="SSF47323">
    <property type="entry name" value="Anticodon-binding domain of a subclass of class I aminoacyl-tRNA synthetases"/>
    <property type="match status" value="1"/>
</dbReference>
<dbReference type="SUPFAM" id="SSF52374">
    <property type="entry name" value="Nucleotidylyl transferase"/>
    <property type="match status" value="1"/>
</dbReference>
<dbReference type="SUPFAM" id="SSF50677">
    <property type="entry name" value="ValRS/IleRS/LeuRS editing domain"/>
    <property type="match status" value="1"/>
</dbReference>
<dbReference type="PROSITE" id="PS00178">
    <property type="entry name" value="AA_TRNA_LIGASE_I"/>
    <property type="match status" value="1"/>
</dbReference>
<comment type="function">
    <text evidence="1">Catalyzes the attachment of isoleucine to tRNA(Ile). As IleRS can inadvertently accommodate and process structurally similar amino acids such as valine, to avoid such errors it has two additional distinct tRNA(Ile)-dependent editing activities. One activity is designated as 'pretransfer' editing and involves the hydrolysis of activated Val-AMP. The other activity is designated 'posttransfer' editing and involves deacylation of mischarged Val-tRNA(Ile).</text>
</comment>
<comment type="catalytic activity">
    <reaction evidence="1">
        <text>tRNA(Ile) + L-isoleucine + ATP = L-isoleucyl-tRNA(Ile) + AMP + diphosphate</text>
        <dbReference type="Rhea" id="RHEA:11060"/>
        <dbReference type="Rhea" id="RHEA-COMP:9666"/>
        <dbReference type="Rhea" id="RHEA-COMP:9695"/>
        <dbReference type="ChEBI" id="CHEBI:30616"/>
        <dbReference type="ChEBI" id="CHEBI:33019"/>
        <dbReference type="ChEBI" id="CHEBI:58045"/>
        <dbReference type="ChEBI" id="CHEBI:78442"/>
        <dbReference type="ChEBI" id="CHEBI:78528"/>
        <dbReference type="ChEBI" id="CHEBI:456215"/>
        <dbReference type="EC" id="6.1.1.5"/>
    </reaction>
</comment>
<comment type="cofactor">
    <cofactor evidence="1">
        <name>Zn(2+)</name>
        <dbReference type="ChEBI" id="CHEBI:29105"/>
    </cofactor>
    <text evidence="1">Binds 1 zinc ion per subunit.</text>
</comment>
<comment type="subunit">
    <text evidence="1">Monomer.</text>
</comment>
<comment type="subcellular location">
    <subcellularLocation>
        <location evidence="1">Cytoplasm</location>
    </subcellularLocation>
</comment>
<comment type="domain">
    <text evidence="1">IleRS has two distinct active sites: one for aminoacylation and one for editing. The misactivated valine is translocated from the active site to the editing site, which sterically excludes the correctly activated isoleucine. The single editing site contains two valyl binding pockets, one specific for each substrate (Val-AMP or Val-tRNA(Ile)).</text>
</comment>
<comment type="similarity">
    <text evidence="1">Belongs to the class-I aminoacyl-tRNA synthetase family. IleS type 1 subfamily.</text>
</comment>
<protein>
    <recommendedName>
        <fullName evidence="1">Isoleucine--tRNA ligase</fullName>
        <ecNumber evidence="1">6.1.1.5</ecNumber>
    </recommendedName>
    <alternativeName>
        <fullName evidence="1">Isoleucyl-tRNA synthetase</fullName>
        <shortName evidence="1">IleRS</shortName>
    </alternativeName>
</protein>
<gene>
    <name evidence="1" type="primary">ileS</name>
    <name type="ordered locus">DP2552</name>
</gene>